<organism>
    <name type="scientific">Scolopendra mutilans</name>
    <name type="common">Chinese red-headed centipede</name>
    <name type="synonym">Scolopendra subspinipes mutilans</name>
    <dbReference type="NCBI Taxonomy" id="2836329"/>
    <lineage>
        <taxon>Eukaryota</taxon>
        <taxon>Metazoa</taxon>
        <taxon>Ecdysozoa</taxon>
        <taxon>Arthropoda</taxon>
        <taxon>Myriapoda</taxon>
        <taxon>Chilopoda</taxon>
        <taxon>Pleurostigmophora</taxon>
        <taxon>Scolopendromorpha</taxon>
        <taxon>Scolopendridae</taxon>
        <taxon>Scolopendra</taxon>
    </lineage>
</organism>
<protein>
    <recommendedName>
        <fullName evidence="5">Kappa-scoloptoxin(03)-Ssm1d</fullName>
        <shortName evidence="5">Kappa-SLPTX(03)-Ssm1d</shortName>
    </recommendedName>
    <alternativeName>
        <fullName evidence="4">Kappa-scoloptoxin-Ssm1d</fullName>
        <shortName evidence="4">Kappa-SLPTX-Ssm1d</shortName>
    </alternativeName>
</protein>
<name>TX31D_SCOMU</name>
<accession>I6RU46</accession>
<sequence>MKLSMAILLVMALIIFTLDKNYSSPKDLPSCEKGIHRKVTCKQCNKRSDNDDDYTKCCKSFDAFITCGFLLSKES</sequence>
<dbReference type="EMBL" id="JQ757071">
    <property type="protein sequence ID" value="AFM55018.1"/>
    <property type="molecule type" value="mRNA"/>
</dbReference>
<dbReference type="SMR" id="I6RU46"/>
<dbReference type="TCDB" id="8.B.26.1.6">
    <property type="family name" value="the scorpion toxin, scoloptoxin (scoloptoxin) family"/>
</dbReference>
<dbReference type="GO" id="GO:0005576">
    <property type="term" value="C:extracellular region"/>
    <property type="evidence" value="ECO:0007669"/>
    <property type="project" value="UniProtKB-SubCell"/>
</dbReference>
<dbReference type="GO" id="GO:0015459">
    <property type="term" value="F:potassium channel regulator activity"/>
    <property type="evidence" value="ECO:0007669"/>
    <property type="project" value="UniProtKB-KW"/>
</dbReference>
<dbReference type="GO" id="GO:0090729">
    <property type="term" value="F:toxin activity"/>
    <property type="evidence" value="ECO:0007669"/>
    <property type="project" value="UniProtKB-KW"/>
</dbReference>
<dbReference type="Gene3D" id="1.10.60.50">
    <property type="match status" value="1"/>
</dbReference>
<evidence type="ECO:0000250" key="1"/>
<evidence type="ECO:0000250" key="2">
    <source>
        <dbReference type="UniProtKB" id="I6RU32"/>
    </source>
</evidence>
<evidence type="ECO:0000255" key="3"/>
<evidence type="ECO:0000303" key="4">
    <source>
    </source>
</evidence>
<evidence type="ECO:0000305" key="5"/>
<evidence type="ECO:0000305" key="6">
    <source>
    </source>
</evidence>
<reference key="1">
    <citation type="journal article" date="2012" name="Mol. Cell. Proteomics">
        <title>Chemical punch packed in venoms makes centipedes excellent predators.</title>
        <authorList>
            <person name="Yang S."/>
            <person name="Liu Z."/>
            <person name="Xiao Y."/>
            <person name="Li Y."/>
            <person name="Rong M."/>
            <person name="Liang S."/>
            <person name="Zhang Z."/>
            <person name="Yu H."/>
            <person name="King G.F."/>
            <person name="Lai R."/>
        </authorList>
    </citation>
    <scope>NUCLEOTIDE SEQUENCE [MRNA]</scope>
    <source>
        <tissue>Venom gland</tissue>
    </source>
</reference>
<feature type="signal peptide" evidence="3">
    <location>
        <begin position="1"/>
        <end position="23"/>
    </location>
</feature>
<feature type="chain" id="PRO_0000425472" description="Kappa-scoloptoxin(03)-Ssm1d" evidence="2">
    <location>
        <begin position="24"/>
        <end position="75"/>
    </location>
</feature>
<comment type="function">
    <text evidence="1">Inhibits voltage-gated potassium channels.</text>
</comment>
<comment type="subcellular location">
    <subcellularLocation>
        <location evidence="6">Secreted</location>
    </subcellularLocation>
</comment>
<comment type="tissue specificity">
    <text evidence="6">Expressed by the venom gland.</text>
</comment>
<comment type="PTM">
    <text evidence="5">Contains 3 disulfide bonds.</text>
</comment>
<comment type="similarity">
    <text evidence="5">Belongs to the scoloptoxin-03 family.</text>
</comment>
<proteinExistence type="inferred from homology"/>
<keyword id="KW-1015">Disulfide bond</keyword>
<keyword id="KW-0872">Ion channel impairing toxin</keyword>
<keyword id="KW-0528">Neurotoxin</keyword>
<keyword id="KW-0632">Potassium channel impairing toxin</keyword>
<keyword id="KW-0964">Secreted</keyword>
<keyword id="KW-0732">Signal</keyword>
<keyword id="KW-0800">Toxin</keyword>
<keyword id="KW-1220">Voltage-gated potassium channel impairing toxin</keyword>